<gene>
    <name type="primary">HEX6</name>
</gene>
<keyword id="KW-0472">Membrane</keyword>
<keyword id="KW-0762">Sugar transport</keyword>
<keyword id="KW-0769">Symport</keyword>
<keyword id="KW-0812">Transmembrane</keyword>
<keyword id="KW-1133">Transmembrane helix</keyword>
<keyword id="KW-0813">Transport</keyword>
<name>HEX6_RICCO</name>
<feature type="chain" id="PRO_0000050445" description="Hexose carrier protein HEX6">
    <location>
        <begin position="1"/>
        <end position="510"/>
    </location>
</feature>
<feature type="topological domain" description="Cytoplasmic" evidence="1">
    <location>
        <begin position="1"/>
        <end position="22"/>
    </location>
</feature>
<feature type="transmembrane region" description="Helical; Name=1" evidence="1">
    <location>
        <begin position="23"/>
        <end position="43"/>
    </location>
</feature>
<feature type="transmembrane region" description="Helical; Name=2" evidence="1">
    <location>
        <begin position="83"/>
        <end position="103"/>
    </location>
</feature>
<feature type="transmembrane region" description="Helical; Name=3" evidence="1">
    <location>
        <begin position="118"/>
        <end position="128"/>
    </location>
</feature>
<feature type="transmembrane region" description="Helical; Name=4" evidence="1">
    <location>
        <begin position="140"/>
        <end position="160"/>
    </location>
</feature>
<feature type="transmembrane region" description="Helical; Name=5" evidence="1">
    <location>
        <begin position="169"/>
        <end position="189"/>
    </location>
</feature>
<feature type="transmembrane region" description="Helical; Name=6" evidence="1">
    <location>
        <begin position="202"/>
        <end position="222"/>
    </location>
</feature>
<feature type="transmembrane region" description="Helical; Name=7" evidence="1">
    <location>
        <begin position="284"/>
        <end position="304"/>
    </location>
</feature>
<feature type="transmembrane region" description="Helical; Name=8" evidence="1">
    <location>
        <begin position="325"/>
        <end position="345"/>
    </location>
</feature>
<feature type="transmembrane region" description="Helical; Name=9" evidence="1">
    <location>
        <begin position="349"/>
        <end position="369"/>
    </location>
</feature>
<feature type="transmembrane region" description="Helical; Name=10" evidence="1">
    <location>
        <begin position="382"/>
        <end position="402"/>
    </location>
</feature>
<feature type="transmembrane region" description="Helical; Name=11" evidence="1">
    <location>
        <begin position="428"/>
        <end position="448"/>
    </location>
</feature>
<feature type="transmembrane region" description="Helical; Name=12" evidence="1">
    <location>
        <begin position="451"/>
        <end position="471"/>
    </location>
</feature>
<feature type="topological domain" description="Cytoplasmic" evidence="1">
    <location>
        <begin position="472"/>
        <end position="510"/>
    </location>
</feature>
<dbReference type="EMBL" id="L08188">
    <property type="protein sequence ID" value="AAA79857.1"/>
    <property type="molecule type" value="mRNA"/>
</dbReference>
<dbReference type="PIR" id="T10124">
    <property type="entry name" value="T10124"/>
</dbReference>
<dbReference type="RefSeq" id="NP_001310704.1">
    <property type="nucleotide sequence ID" value="NM_001323775.1"/>
</dbReference>
<dbReference type="GeneID" id="8289638"/>
<dbReference type="KEGG" id="rcu:8289638"/>
<dbReference type="eggNOG" id="KOG0254">
    <property type="taxonomic scope" value="Eukaryota"/>
</dbReference>
<dbReference type="OMA" id="INNMACP"/>
<dbReference type="OrthoDB" id="5296287at2759"/>
<dbReference type="GO" id="GO:0016020">
    <property type="term" value="C:membrane"/>
    <property type="evidence" value="ECO:0007669"/>
    <property type="project" value="UniProtKB-SubCell"/>
</dbReference>
<dbReference type="GO" id="GO:0015145">
    <property type="term" value="F:monosaccharide transmembrane transporter activity"/>
    <property type="evidence" value="ECO:0007669"/>
    <property type="project" value="InterPro"/>
</dbReference>
<dbReference type="GO" id="GO:0015293">
    <property type="term" value="F:symporter activity"/>
    <property type="evidence" value="ECO:0007669"/>
    <property type="project" value="UniProtKB-KW"/>
</dbReference>
<dbReference type="CDD" id="cd17361">
    <property type="entry name" value="MFS_STP"/>
    <property type="match status" value="1"/>
</dbReference>
<dbReference type="FunFam" id="1.20.1250.20:FF:000002">
    <property type="entry name" value="Sugar transport protein 13"/>
    <property type="match status" value="1"/>
</dbReference>
<dbReference type="Gene3D" id="1.20.1250.20">
    <property type="entry name" value="MFS general substrate transporter like domains"/>
    <property type="match status" value="1"/>
</dbReference>
<dbReference type="InterPro" id="IPR020846">
    <property type="entry name" value="MFS_dom"/>
</dbReference>
<dbReference type="InterPro" id="IPR044778">
    <property type="entry name" value="MFS_STP/MST-like_plant"/>
</dbReference>
<dbReference type="InterPro" id="IPR005828">
    <property type="entry name" value="MFS_sugar_transport-like"/>
</dbReference>
<dbReference type="InterPro" id="IPR036259">
    <property type="entry name" value="MFS_trans_sf"/>
</dbReference>
<dbReference type="InterPro" id="IPR045262">
    <property type="entry name" value="STP/PLT_plant"/>
</dbReference>
<dbReference type="InterPro" id="IPR003663">
    <property type="entry name" value="Sugar/inositol_transpt"/>
</dbReference>
<dbReference type="InterPro" id="IPR005829">
    <property type="entry name" value="Sugar_transporter_CS"/>
</dbReference>
<dbReference type="NCBIfam" id="TIGR00879">
    <property type="entry name" value="SP"/>
    <property type="match status" value="1"/>
</dbReference>
<dbReference type="PANTHER" id="PTHR23500">
    <property type="entry name" value="SOLUTE CARRIER FAMILY 2, FACILITATED GLUCOSE TRANSPORTER"/>
    <property type="match status" value="1"/>
</dbReference>
<dbReference type="PANTHER" id="PTHR23500:SF30">
    <property type="entry name" value="SUGAR TRANSPORT PROTEIN 3"/>
    <property type="match status" value="1"/>
</dbReference>
<dbReference type="Pfam" id="PF00083">
    <property type="entry name" value="Sugar_tr"/>
    <property type="match status" value="1"/>
</dbReference>
<dbReference type="PRINTS" id="PR00171">
    <property type="entry name" value="SUGRTRNSPORT"/>
</dbReference>
<dbReference type="SUPFAM" id="SSF103473">
    <property type="entry name" value="MFS general substrate transporter"/>
    <property type="match status" value="1"/>
</dbReference>
<dbReference type="PROSITE" id="PS50850">
    <property type="entry name" value="MFS"/>
    <property type="match status" value="1"/>
</dbReference>
<dbReference type="PROSITE" id="PS00216">
    <property type="entry name" value="SUGAR_TRANSPORT_1"/>
    <property type="match status" value="1"/>
</dbReference>
<dbReference type="PROSITE" id="PS00217">
    <property type="entry name" value="SUGAR_TRANSPORT_2"/>
    <property type="match status" value="1"/>
</dbReference>
<reference key="1">
    <citation type="journal article" date="1994" name="J. Plant Physiol.">
        <title>Isolation of a family of cDNA-clones from Ricinus communis L. with close homology to the hexose carriers.</title>
        <authorList>
            <person name="Weig A."/>
            <person name="Franz J."/>
            <person name="Sauer N."/>
            <person name="Komor E."/>
        </authorList>
    </citation>
    <scope>NUCLEOTIDE SEQUENCE [MRNA]</scope>
    <source>
        <strain>cv. Carmencita</strain>
        <tissue>Cotyledon</tissue>
    </source>
</reference>
<proteinExistence type="evidence at transcript level"/>
<comment type="function">
    <text>Active uptake of hexoses. Probable glucose/hydrogen symport.</text>
</comment>
<comment type="subcellular location">
    <subcellularLocation>
        <location>Membrane</location>
        <topology>Multi-pass membrane protein</topology>
    </subcellularLocation>
</comment>
<comment type="similarity">
    <text evidence="2">Belongs to the major facilitator superfamily. Sugar transporter (TC 2.A.1.1) family.</text>
</comment>
<evidence type="ECO:0000255" key="1"/>
<evidence type="ECO:0000305" key="2"/>
<organism>
    <name type="scientific">Ricinus communis</name>
    <name type="common">Castor bean</name>
    <dbReference type="NCBI Taxonomy" id="3988"/>
    <lineage>
        <taxon>Eukaryota</taxon>
        <taxon>Viridiplantae</taxon>
        <taxon>Streptophyta</taxon>
        <taxon>Embryophyta</taxon>
        <taxon>Tracheophyta</taxon>
        <taxon>Spermatophyta</taxon>
        <taxon>Magnoliopsida</taxon>
        <taxon>eudicotyledons</taxon>
        <taxon>Gunneridae</taxon>
        <taxon>Pentapetalae</taxon>
        <taxon>rosids</taxon>
        <taxon>fabids</taxon>
        <taxon>Malpighiales</taxon>
        <taxon>Euphorbiaceae</taxon>
        <taxon>Acalyphoideae</taxon>
        <taxon>Acalypheae</taxon>
        <taxon>Ricinus</taxon>
    </lineage>
</organism>
<accession>Q07423</accession>
<sequence length="510" mass="55597">MAAGLAITSEGGQYNGRMTSFVALSCMMAAMGGVIFGYDIGVSGGVTSMDPFLKKFFPDVYRKMKEDTEISNYCKFDSQLLTSFTSSLYVAGLVASFFASSVTRAFGRKPSILLGGXVFLAXAALGGAAVNVYMLIFGRVLLGVGVGFANQAVPLYLSEMAPPRYRGAINNGFQFSVGIGALSANLINYGTEKIEGGWGWRISLAMAAVPAAILTFGALFLPETPNSLIQRSNDHERAKLMLQRVRGTTDVQAELDDLIKASIISRTIQHPFKNIMRRKYRPQLVMAVAIPFFQQVTGINVIAFYAPILFRTIGLEESASLLSSIVTGLVGSASTFISMLIVDKLGRRALFIFGGVQMFVAQIMVGSIMAAELGDHGGIGKGYAYIVLILICIYVAGFGWSWGPLGWLVPSEIFPLEIRSAGQSIVVAVSFLFTFVVAQTFLSMLCHFKSGIFFFFGGWVVVMTAFVHFLLPETKKVPIEKMDIVWRDHWFWKKIIGEEAAEENNKMEAA</sequence>
<protein>
    <recommendedName>
        <fullName>Hexose carrier protein HEX6</fullName>
    </recommendedName>
</protein>